<protein>
    <recommendedName>
        <fullName evidence="1">Small ribosomal subunit protein bS21C</fullName>
    </recommendedName>
    <alternativeName>
        <fullName evidence="3">30S ribosomal protein S21 3</fullName>
    </alternativeName>
</protein>
<keyword id="KW-0687">Ribonucleoprotein</keyword>
<keyword id="KW-0689">Ribosomal protein</keyword>
<reference key="1">
    <citation type="journal article" date="2005" name="BMC Genomics">
        <title>Bacterial genome adaptation to niches: divergence of the potential virulence genes in three Burkholderia species of different survival strategies.</title>
        <authorList>
            <person name="Kim H.S."/>
            <person name="Schell M.A."/>
            <person name="Yu Y."/>
            <person name="Ulrich R.L."/>
            <person name="Sarria S.H."/>
            <person name="Nierman W.C."/>
            <person name="DeShazer D."/>
        </authorList>
    </citation>
    <scope>NUCLEOTIDE SEQUENCE [LARGE SCALE GENOMIC DNA]</scope>
    <source>
        <strain>ATCC 700388 / DSM 13276 / CCUG 48851 / CIP 106301 / E264</strain>
    </source>
</reference>
<comment type="similarity">
    <text evidence="1">Belongs to the bacterial ribosomal protein bS21 family.</text>
</comment>
<evidence type="ECO:0000255" key="1">
    <source>
        <dbReference type="HAMAP-Rule" id="MF_00358"/>
    </source>
</evidence>
<evidence type="ECO:0000256" key="2">
    <source>
        <dbReference type="SAM" id="MobiDB-lite"/>
    </source>
</evidence>
<evidence type="ECO:0000305" key="3"/>
<dbReference type="EMBL" id="CP000085">
    <property type="protein sequence ID" value="ABC34449.1"/>
    <property type="molecule type" value="Genomic_DNA"/>
</dbReference>
<dbReference type="SMR" id="Q2T6K1"/>
<dbReference type="GeneID" id="45118469"/>
<dbReference type="KEGG" id="bte:BTH_II1001"/>
<dbReference type="HOGENOM" id="CLU_159258_1_1_4"/>
<dbReference type="Proteomes" id="UP000001930">
    <property type="component" value="Chromosome II"/>
</dbReference>
<dbReference type="GO" id="GO:1990904">
    <property type="term" value="C:ribonucleoprotein complex"/>
    <property type="evidence" value="ECO:0007669"/>
    <property type="project" value="UniProtKB-KW"/>
</dbReference>
<dbReference type="GO" id="GO:0005840">
    <property type="term" value="C:ribosome"/>
    <property type="evidence" value="ECO:0007669"/>
    <property type="project" value="UniProtKB-KW"/>
</dbReference>
<dbReference type="GO" id="GO:0003735">
    <property type="term" value="F:structural constituent of ribosome"/>
    <property type="evidence" value="ECO:0007669"/>
    <property type="project" value="InterPro"/>
</dbReference>
<dbReference type="GO" id="GO:0006412">
    <property type="term" value="P:translation"/>
    <property type="evidence" value="ECO:0007669"/>
    <property type="project" value="UniProtKB-UniRule"/>
</dbReference>
<dbReference type="Gene3D" id="1.20.5.1150">
    <property type="entry name" value="Ribosomal protein S8"/>
    <property type="match status" value="1"/>
</dbReference>
<dbReference type="HAMAP" id="MF_00358">
    <property type="entry name" value="Ribosomal_bS21"/>
    <property type="match status" value="1"/>
</dbReference>
<dbReference type="InterPro" id="IPR001911">
    <property type="entry name" value="Ribosomal_bS21"/>
</dbReference>
<dbReference type="InterPro" id="IPR038380">
    <property type="entry name" value="Ribosomal_bS21_sf"/>
</dbReference>
<dbReference type="NCBIfam" id="TIGR00030">
    <property type="entry name" value="S21p"/>
    <property type="match status" value="1"/>
</dbReference>
<dbReference type="PANTHER" id="PTHR21109">
    <property type="entry name" value="MITOCHONDRIAL 28S RIBOSOMAL PROTEIN S21"/>
    <property type="match status" value="1"/>
</dbReference>
<dbReference type="PANTHER" id="PTHR21109:SF22">
    <property type="entry name" value="SMALL RIBOSOMAL SUBUNIT PROTEIN BS21"/>
    <property type="match status" value="1"/>
</dbReference>
<dbReference type="Pfam" id="PF01165">
    <property type="entry name" value="Ribosomal_S21"/>
    <property type="match status" value="1"/>
</dbReference>
<dbReference type="PRINTS" id="PR00976">
    <property type="entry name" value="RIBOSOMALS21"/>
</dbReference>
<organism>
    <name type="scientific">Burkholderia thailandensis (strain ATCC 700388 / DSM 13276 / CCUG 48851 / CIP 106301 / E264)</name>
    <dbReference type="NCBI Taxonomy" id="271848"/>
    <lineage>
        <taxon>Bacteria</taxon>
        <taxon>Pseudomonadati</taxon>
        <taxon>Pseudomonadota</taxon>
        <taxon>Betaproteobacteria</taxon>
        <taxon>Burkholderiales</taxon>
        <taxon>Burkholderiaceae</taxon>
        <taxon>Burkholderia</taxon>
        <taxon>pseudomallei group</taxon>
    </lineage>
</organism>
<feature type="chain" id="PRO_0000266646" description="Small ribosomal subunit protein bS21C">
    <location>
        <begin position="1"/>
        <end position="70"/>
    </location>
</feature>
<feature type="region of interest" description="Disordered" evidence="2">
    <location>
        <begin position="38"/>
        <end position="70"/>
    </location>
</feature>
<feature type="compositionally biased region" description="Basic residues" evidence="2">
    <location>
        <begin position="45"/>
        <end position="70"/>
    </location>
</feature>
<proteinExistence type="inferred from homology"/>
<name>RS213_BURTA</name>
<sequence length="70" mass="8293">MTTIILNPNEPVEVALRRFRRSIEKTGLIKELRARTSYEKPTTERKRKKAAAVARLRKQVRRSMPPKKKY</sequence>
<gene>
    <name evidence="1" type="primary">rpsU3</name>
    <name type="ordered locus">BTH_II1001</name>
</gene>
<accession>Q2T6K1</accession>